<proteinExistence type="evidence at protein level"/>
<name>APOA2_HUMAN</name>
<gene>
    <name type="primary">APOA2</name>
</gene>
<accession>P02652</accession>
<accession>B2R524</accession>
<keyword id="KW-0165">Cleavage on pair of basic residues</keyword>
<keyword id="KW-0903">Direct protein sequencing</keyword>
<keyword id="KW-1015">Disulfide bond</keyword>
<keyword id="KW-0325">Glycoprotein</keyword>
<keyword id="KW-0345">HDL</keyword>
<keyword id="KW-0945">Host-virus interaction</keyword>
<keyword id="KW-0445">Lipid transport</keyword>
<keyword id="KW-0558">Oxidation</keyword>
<keyword id="KW-0597">Phosphoprotein</keyword>
<keyword id="KW-1267">Proteomics identification</keyword>
<keyword id="KW-0873">Pyrrolidone carboxylic acid</keyword>
<keyword id="KW-1185">Reference proteome</keyword>
<keyword id="KW-0964">Secreted</keyword>
<keyword id="KW-0732">Signal</keyword>
<keyword id="KW-0813">Transport</keyword>
<protein>
    <recommendedName>
        <fullName>Apolipoprotein A-II</fullName>
        <shortName>Apo-AII</shortName>
        <shortName>ApoA-II</shortName>
    </recommendedName>
    <alternativeName>
        <fullName>Apolipoprotein A2</fullName>
    </alternativeName>
    <component>
        <recommendedName>
            <fullName>Proapolipoprotein A-II</fullName>
            <shortName>ProapoA-II</shortName>
        </recommendedName>
    </component>
    <component>
        <recommendedName>
            <fullName>Truncated apolipoprotein A-II</fullName>
        </recommendedName>
        <alternativeName>
            <fullName>Apolipoprotein A-II(1-76)</fullName>
        </alternativeName>
    </component>
</protein>
<reference key="1">
    <citation type="journal article" date="1984" name="Biochem. Biophys. Res. Commun.">
        <title>Isolation and characterisation of a cDNA encoding the precursor for human apolipoprotein AII.</title>
        <authorList>
            <person name="Knott T.J."/>
            <person name="Priestley L.M."/>
            <person name="Urdea M."/>
            <person name="Scott J."/>
        </authorList>
    </citation>
    <scope>NUCLEOTIDE SEQUENCE [GENOMIC DNA]</scope>
</reference>
<reference key="2">
    <citation type="journal article" date="1984" name="Biochem. Biophys. Res. Commun.">
        <title>Human apolipoprotein A-II: nucleotide sequence of a cloned cDNA, and localization of its structural gene on human chromosome 1.</title>
        <authorList>
            <person name="Moore M.N."/>
            <person name="Kao F.-T."/>
            <person name="Tsao Y.-K."/>
            <person name="Chan L."/>
        </authorList>
    </citation>
    <scope>NUCLEOTIDE SEQUENCE [MRNA]</scope>
</reference>
<reference key="3">
    <citation type="journal article" date="1984" name="Nucleic Acids Res.">
        <title>Human apolipoproteins AI, AII, CII and CIII. cDNA sequences and mRNA abundance.</title>
        <authorList>
            <person name="Sharpe C.R."/>
            <person name="Sidoli A."/>
            <person name="Shelley C.S."/>
            <person name="Lucero M.A."/>
            <person name="Shoulders C.C."/>
            <person name="Baralle F.E."/>
        </authorList>
    </citation>
    <scope>NUCLEOTIDE SEQUENCE [MRNA]</scope>
</reference>
<reference key="4">
    <citation type="journal article" date="1985" name="Nucleic Acids Res.">
        <title>The human apolipoprotein A-II gene: complete nucleic acid sequence and genomic organization.</title>
        <authorList>
            <person name="Lackner K.J."/>
            <person name="Law S.W."/>
            <person name="Brewer H.B. Jr."/>
        </authorList>
    </citation>
    <scope>NUCLEOTIDE SEQUENCE [GENOMIC DNA]</scope>
</reference>
<reference key="5">
    <citation type="journal article" date="1985" name="Nucleic Acids Res.">
        <title>The human apolipoprotein AII gene: structural organization and sites of expression.</title>
        <authorList>
            <person name="Knott T.J."/>
            <person name="Wallis S.C."/>
            <person name="Robertson M.E."/>
            <person name="Priestley L.M."/>
            <person name="Urdea M."/>
            <person name="Rall L.B."/>
            <person name="Scott J."/>
        </authorList>
    </citation>
    <scope>NUCLEOTIDE SEQUENCE [GENOMIC DNA]</scope>
</reference>
<reference key="6">
    <citation type="journal article" date="1986" name="Methods Enzymol.">
        <title>Molecular cloning and sequence analysis of human apolipoprotein A-II cDNA.</title>
        <authorList>
            <person name="Chan L."/>
            <person name="Moore M.N."/>
            <person name="Tsao Y.-K."/>
        </authorList>
    </citation>
    <scope>NUCLEOTIDE SEQUENCE [MRNA]</scope>
</reference>
<reference key="7">
    <citation type="journal article" date="2002" name="Hum. Genet.">
        <title>Sequence polymorphism at the human apolipoprotein AII gene (APOA2): unexpected deficit of variation in an African-American sample.</title>
        <authorList>
            <person name="Fullerton S.M."/>
            <person name="Clark A.G."/>
            <person name="Weiss K.M."/>
            <person name="Taylor S.L."/>
            <person name="Stengard J.H."/>
            <person name="Salomaa V."/>
            <person name="Boerwinkle E."/>
            <person name="Nickerson D.A."/>
        </authorList>
    </citation>
    <scope>NUCLEOTIDE SEQUENCE [GENOMIC DNA]</scope>
</reference>
<reference key="8">
    <citation type="journal article" date="2004" name="Nat. Genet.">
        <title>Complete sequencing and characterization of 21,243 full-length human cDNAs.</title>
        <authorList>
            <person name="Ota T."/>
            <person name="Suzuki Y."/>
            <person name="Nishikawa T."/>
            <person name="Otsuki T."/>
            <person name="Sugiyama T."/>
            <person name="Irie R."/>
            <person name="Wakamatsu A."/>
            <person name="Hayashi K."/>
            <person name="Sato H."/>
            <person name="Nagai K."/>
            <person name="Kimura K."/>
            <person name="Makita H."/>
            <person name="Sekine M."/>
            <person name="Obayashi M."/>
            <person name="Nishi T."/>
            <person name="Shibahara T."/>
            <person name="Tanaka T."/>
            <person name="Ishii S."/>
            <person name="Yamamoto J."/>
            <person name="Saito K."/>
            <person name="Kawai Y."/>
            <person name="Isono Y."/>
            <person name="Nakamura Y."/>
            <person name="Nagahari K."/>
            <person name="Murakami K."/>
            <person name="Yasuda T."/>
            <person name="Iwayanagi T."/>
            <person name="Wagatsuma M."/>
            <person name="Shiratori A."/>
            <person name="Sudo H."/>
            <person name="Hosoiri T."/>
            <person name="Kaku Y."/>
            <person name="Kodaira H."/>
            <person name="Kondo H."/>
            <person name="Sugawara M."/>
            <person name="Takahashi M."/>
            <person name="Kanda K."/>
            <person name="Yokoi T."/>
            <person name="Furuya T."/>
            <person name="Kikkawa E."/>
            <person name="Omura Y."/>
            <person name="Abe K."/>
            <person name="Kamihara K."/>
            <person name="Katsuta N."/>
            <person name="Sato K."/>
            <person name="Tanikawa M."/>
            <person name="Yamazaki M."/>
            <person name="Ninomiya K."/>
            <person name="Ishibashi T."/>
            <person name="Yamashita H."/>
            <person name="Murakawa K."/>
            <person name="Fujimori K."/>
            <person name="Tanai H."/>
            <person name="Kimata M."/>
            <person name="Watanabe M."/>
            <person name="Hiraoka S."/>
            <person name="Chiba Y."/>
            <person name="Ishida S."/>
            <person name="Ono Y."/>
            <person name="Takiguchi S."/>
            <person name="Watanabe S."/>
            <person name="Yosida M."/>
            <person name="Hotuta T."/>
            <person name="Kusano J."/>
            <person name="Kanehori K."/>
            <person name="Takahashi-Fujii A."/>
            <person name="Hara H."/>
            <person name="Tanase T.-O."/>
            <person name="Nomura Y."/>
            <person name="Togiya S."/>
            <person name="Komai F."/>
            <person name="Hara R."/>
            <person name="Takeuchi K."/>
            <person name="Arita M."/>
            <person name="Imose N."/>
            <person name="Musashino K."/>
            <person name="Yuuki H."/>
            <person name="Oshima A."/>
            <person name="Sasaki N."/>
            <person name="Aotsuka S."/>
            <person name="Yoshikawa Y."/>
            <person name="Matsunawa H."/>
            <person name="Ichihara T."/>
            <person name="Shiohata N."/>
            <person name="Sano S."/>
            <person name="Moriya S."/>
            <person name="Momiyama H."/>
            <person name="Satoh N."/>
            <person name="Takami S."/>
            <person name="Terashima Y."/>
            <person name="Suzuki O."/>
            <person name="Nakagawa S."/>
            <person name="Senoh A."/>
            <person name="Mizoguchi H."/>
            <person name="Goto Y."/>
            <person name="Shimizu F."/>
            <person name="Wakebe H."/>
            <person name="Hishigaki H."/>
            <person name="Watanabe T."/>
            <person name="Sugiyama A."/>
            <person name="Takemoto M."/>
            <person name="Kawakami B."/>
            <person name="Yamazaki M."/>
            <person name="Watanabe K."/>
            <person name="Kumagai A."/>
            <person name="Itakura S."/>
            <person name="Fukuzumi Y."/>
            <person name="Fujimori Y."/>
            <person name="Komiyama M."/>
            <person name="Tashiro H."/>
            <person name="Tanigami A."/>
            <person name="Fujiwara T."/>
            <person name="Ono T."/>
            <person name="Yamada K."/>
            <person name="Fujii Y."/>
            <person name="Ozaki K."/>
            <person name="Hirao M."/>
            <person name="Ohmori Y."/>
            <person name="Kawabata A."/>
            <person name="Hikiji T."/>
            <person name="Kobatake N."/>
            <person name="Inagaki H."/>
            <person name="Ikema Y."/>
            <person name="Okamoto S."/>
            <person name="Okitani R."/>
            <person name="Kawakami T."/>
            <person name="Noguchi S."/>
            <person name="Itoh T."/>
            <person name="Shigeta K."/>
            <person name="Senba T."/>
            <person name="Matsumura K."/>
            <person name="Nakajima Y."/>
            <person name="Mizuno T."/>
            <person name="Morinaga M."/>
            <person name="Sasaki M."/>
            <person name="Togashi T."/>
            <person name="Oyama M."/>
            <person name="Hata H."/>
            <person name="Watanabe M."/>
            <person name="Komatsu T."/>
            <person name="Mizushima-Sugano J."/>
            <person name="Satoh T."/>
            <person name="Shirai Y."/>
            <person name="Takahashi Y."/>
            <person name="Nakagawa K."/>
            <person name="Okumura K."/>
            <person name="Nagase T."/>
            <person name="Nomura N."/>
            <person name="Kikuchi H."/>
            <person name="Masuho Y."/>
            <person name="Yamashita R."/>
            <person name="Nakai K."/>
            <person name="Yada T."/>
            <person name="Nakamura Y."/>
            <person name="Ohara O."/>
            <person name="Isogai T."/>
            <person name="Sugano S."/>
        </authorList>
    </citation>
    <scope>NUCLEOTIDE SEQUENCE [LARGE SCALE MRNA]</scope>
    <source>
        <tissue>Liver</tissue>
    </source>
</reference>
<reference key="9">
    <citation type="submission" date="2003-05" db="EMBL/GenBank/DDBJ databases">
        <title>Cloning of human full-length CDSs in BD Creator(TM) system donor vector.</title>
        <authorList>
            <person name="Kalnine N."/>
            <person name="Chen X."/>
            <person name="Rolfs A."/>
            <person name="Halleck A."/>
            <person name="Hines L."/>
            <person name="Eisenstein S."/>
            <person name="Koundinya M."/>
            <person name="Raphael J."/>
            <person name="Moreira D."/>
            <person name="Kelley T."/>
            <person name="LaBaer J."/>
            <person name="Lin Y."/>
            <person name="Phelan M."/>
            <person name="Farmer A."/>
        </authorList>
    </citation>
    <scope>NUCLEOTIDE SEQUENCE [LARGE SCALE MRNA]</scope>
</reference>
<reference key="10">
    <citation type="journal article" date="2006" name="Nature">
        <title>The DNA sequence and biological annotation of human chromosome 1.</title>
        <authorList>
            <person name="Gregory S.G."/>
            <person name="Barlow K.F."/>
            <person name="McLay K.E."/>
            <person name="Kaul R."/>
            <person name="Swarbreck D."/>
            <person name="Dunham A."/>
            <person name="Scott C.E."/>
            <person name="Howe K.L."/>
            <person name="Woodfine K."/>
            <person name="Spencer C.C.A."/>
            <person name="Jones M.C."/>
            <person name="Gillson C."/>
            <person name="Searle S."/>
            <person name="Zhou Y."/>
            <person name="Kokocinski F."/>
            <person name="McDonald L."/>
            <person name="Evans R."/>
            <person name="Phillips K."/>
            <person name="Atkinson A."/>
            <person name="Cooper R."/>
            <person name="Jones C."/>
            <person name="Hall R.E."/>
            <person name="Andrews T.D."/>
            <person name="Lloyd C."/>
            <person name="Ainscough R."/>
            <person name="Almeida J.P."/>
            <person name="Ambrose K.D."/>
            <person name="Anderson F."/>
            <person name="Andrew R.W."/>
            <person name="Ashwell R.I.S."/>
            <person name="Aubin K."/>
            <person name="Babbage A.K."/>
            <person name="Bagguley C.L."/>
            <person name="Bailey J."/>
            <person name="Beasley H."/>
            <person name="Bethel G."/>
            <person name="Bird C.P."/>
            <person name="Bray-Allen S."/>
            <person name="Brown J.Y."/>
            <person name="Brown A.J."/>
            <person name="Buckley D."/>
            <person name="Burton J."/>
            <person name="Bye J."/>
            <person name="Carder C."/>
            <person name="Chapman J.C."/>
            <person name="Clark S.Y."/>
            <person name="Clarke G."/>
            <person name="Clee C."/>
            <person name="Cobley V."/>
            <person name="Collier R.E."/>
            <person name="Corby N."/>
            <person name="Coville G.J."/>
            <person name="Davies J."/>
            <person name="Deadman R."/>
            <person name="Dunn M."/>
            <person name="Earthrowl M."/>
            <person name="Ellington A.G."/>
            <person name="Errington H."/>
            <person name="Frankish A."/>
            <person name="Frankland J."/>
            <person name="French L."/>
            <person name="Garner P."/>
            <person name="Garnett J."/>
            <person name="Gay L."/>
            <person name="Ghori M.R.J."/>
            <person name="Gibson R."/>
            <person name="Gilby L.M."/>
            <person name="Gillett W."/>
            <person name="Glithero R.J."/>
            <person name="Grafham D.V."/>
            <person name="Griffiths C."/>
            <person name="Griffiths-Jones S."/>
            <person name="Grocock R."/>
            <person name="Hammond S."/>
            <person name="Harrison E.S.I."/>
            <person name="Hart E."/>
            <person name="Haugen E."/>
            <person name="Heath P.D."/>
            <person name="Holmes S."/>
            <person name="Holt K."/>
            <person name="Howden P.J."/>
            <person name="Hunt A.R."/>
            <person name="Hunt S.E."/>
            <person name="Hunter G."/>
            <person name="Isherwood J."/>
            <person name="James R."/>
            <person name="Johnson C."/>
            <person name="Johnson D."/>
            <person name="Joy A."/>
            <person name="Kay M."/>
            <person name="Kershaw J.K."/>
            <person name="Kibukawa M."/>
            <person name="Kimberley A.M."/>
            <person name="King A."/>
            <person name="Knights A.J."/>
            <person name="Lad H."/>
            <person name="Laird G."/>
            <person name="Lawlor S."/>
            <person name="Leongamornlert D.A."/>
            <person name="Lloyd D.M."/>
            <person name="Loveland J."/>
            <person name="Lovell J."/>
            <person name="Lush M.J."/>
            <person name="Lyne R."/>
            <person name="Martin S."/>
            <person name="Mashreghi-Mohammadi M."/>
            <person name="Matthews L."/>
            <person name="Matthews N.S.W."/>
            <person name="McLaren S."/>
            <person name="Milne S."/>
            <person name="Mistry S."/>
            <person name="Moore M.J.F."/>
            <person name="Nickerson T."/>
            <person name="O'Dell C.N."/>
            <person name="Oliver K."/>
            <person name="Palmeiri A."/>
            <person name="Palmer S.A."/>
            <person name="Parker A."/>
            <person name="Patel D."/>
            <person name="Pearce A.V."/>
            <person name="Peck A.I."/>
            <person name="Pelan S."/>
            <person name="Phelps K."/>
            <person name="Phillimore B.J."/>
            <person name="Plumb R."/>
            <person name="Rajan J."/>
            <person name="Raymond C."/>
            <person name="Rouse G."/>
            <person name="Saenphimmachak C."/>
            <person name="Sehra H.K."/>
            <person name="Sheridan E."/>
            <person name="Shownkeen R."/>
            <person name="Sims S."/>
            <person name="Skuce C.D."/>
            <person name="Smith M."/>
            <person name="Steward C."/>
            <person name="Subramanian S."/>
            <person name="Sycamore N."/>
            <person name="Tracey A."/>
            <person name="Tromans A."/>
            <person name="Van Helmond Z."/>
            <person name="Wall M."/>
            <person name="Wallis J.M."/>
            <person name="White S."/>
            <person name="Whitehead S.L."/>
            <person name="Wilkinson J.E."/>
            <person name="Willey D.L."/>
            <person name="Williams H."/>
            <person name="Wilming L."/>
            <person name="Wray P.W."/>
            <person name="Wu Z."/>
            <person name="Coulson A."/>
            <person name="Vaudin M."/>
            <person name="Sulston J.E."/>
            <person name="Durbin R.M."/>
            <person name="Hubbard T."/>
            <person name="Wooster R."/>
            <person name="Dunham I."/>
            <person name="Carter N.P."/>
            <person name="McVean G."/>
            <person name="Ross M.T."/>
            <person name="Harrow J."/>
            <person name="Olson M.V."/>
            <person name="Beck S."/>
            <person name="Rogers J."/>
            <person name="Bentley D.R."/>
        </authorList>
    </citation>
    <scope>NUCLEOTIDE SEQUENCE [LARGE SCALE GENOMIC DNA]</scope>
</reference>
<reference key="11">
    <citation type="journal article" date="2004" name="Genome Res.">
        <title>The status, quality, and expansion of the NIH full-length cDNA project: the Mammalian Gene Collection (MGC).</title>
        <authorList>
            <consortium name="The MGC Project Team"/>
        </authorList>
    </citation>
    <scope>NUCLEOTIDE SEQUENCE [LARGE SCALE MRNA]</scope>
    <source>
        <tissue>Skeletal muscle</tissue>
    </source>
</reference>
<reference key="12">
    <citation type="journal article" date="1972" name="J. Biol. Chem.">
        <title>Isolation and characterization of the tryptic and cyanogen bromide peptides of apoLp-Gln-II (apoA-II), plasma high density apolipoprotein.</title>
        <authorList>
            <person name="Lux S.E."/>
            <person name="John K.M."/>
            <person name="Ronan R."/>
            <person name="Brewer H.B. Jr."/>
        </authorList>
    </citation>
    <scope>PROTEIN SEQUENCE OF 24-100</scope>
    <scope>PYROGLUTAMATE FORMATION AT GLN-24</scope>
</reference>
<reference key="13">
    <citation type="journal article" date="2013" name="Assay Drug Dev. Technol.">
        <title>Expression and purification of recombinant human apolipoprotein A-II in Pichia pastoris.</title>
        <authorList>
            <person name="Su M."/>
            <person name="Qi Y."/>
            <person name="Wang M."/>
            <person name="Chang W."/>
            <person name="Peng S."/>
            <person name="Xu T."/>
            <person name="Wang D."/>
        </authorList>
    </citation>
    <scope>PROTEIN SEQUENCE OF 25-37</scope>
    <scope>MASS SPECTROMETRY</scope>
    <scope>SUBUNIT</scope>
    <scope>SUBCELLULAR LOCATION</scope>
    <scope>PYROGLUTAMATE FORMATION AT GLN-24</scope>
</reference>
<reference key="14">
    <citation type="journal article" date="1983" name="Hoppe-Seyler's Z. Physiol. Chem.">
        <title>Cell-free translation of human liver apolipoprotein AI and AII mRNA. Processing of primary translation products.</title>
        <authorList>
            <person name="Stoffel W."/>
            <person name="Krueger E."/>
            <person name="Deutzmann R."/>
        </authorList>
    </citation>
    <scope>PARTIAL PROTEIN SEQUENCE OF 1-29</scope>
</reference>
<reference key="15">
    <citation type="journal article" date="1990" name="Am. J. Hum. Genet.">
        <title>A splice-junction mutation responsible for familial apolipoprotein A-II deficiency.</title>
        <authorList>
            <person name="Deeb S.S."/>
            <person name="Takata K."/>
            <person name="Peng R.L."/>
            <person name="Kajiyama G."/>
            <person name="Albers J.J."/>
        </authorList>
    </citation>
    <scope>POLYMORPHISM</scope>
</reference>
<reference key="16">
    <citation type="journal article" date="1994" name="Biochemistry">
        <title>Structure of human apolipoprotein D: locations of the intermolecular and intramolecular disulfide links.</title>
        <authorList>
            <person name="Yang C.-Y."/>
            <person name="Gu Z.-W."/>
            <person name="Blanco-Vaca F."/>
            <person name="Gaskell S.J."/>
            <person name="Yang M."/>
            <person name="Massey J.B."/>
            <person name="Gotto A.M. Jr."/>
            <person name="Pownall H.J."/>
        </authorList>
    </citation>
    <scope>INTERCHAIN DISULFIDE BOND WITH APOD</scope>
    <scope>INTERACTION WITH APOD</scope>
    <source>
        <tissue>Plasma</tissue>
    </source>
</reference>
<reference key="17">
    <citation type="journal article" date="1999" name="Hepatology">
        <title>Hepatitis C virus core protein binds to apolipoprotein AII and its secretion is modulated by fibrates.</title>
        <authorList>
            <person name="Sabile A."/>
            <person name="Perlemuter G."/>
            <person name="Bono F."/>
            <person name="Kohara K."/>
            <person name="Demaugre F."/>
            <person name="Kohara M."/>
            <person name="Matsuura Y."/>
            <person name="Miyamura T."/>
            <person name="Brechot C."/>
            <person name="Barba G."/>
        </authorList>
    </citation>
    <scope>INTERACTION WITH HEPATITIS C VIRUS/HCV CORE PROTEIN (MICROBIAL INFECTION)</scope>
</reference>
<reference key="18">
    <citation type="journal article" date="2002" name="Biochemistry">
        <title>Structures of apolipoprotein A-II and a lipid-surrogate complex provide insights into apolipoprotein-lipid interactions.</title>
        <authorList>
            <person name="Kumar M.S."/>
            <person name="Carson M."/>
            <person name="Hussain M.M."/>
            <person name="Murthy H.M."/>
        </authorList>
    </citation>
    <scope>RETRACTED PAPER</scope>
</reference>
<reference key="19">
    <citation type="journal article" date="2018" name="Biochemistry">
        <authorList>
            <person name="Kumar M.S."/>
            <person name="Carson M."/>
            <person name="Hussain M.M."/>
            <person name="Murthy H.M.K."/>
        </authorList>
    </citation>
    <scope>RETRACTION NOTICE OF PUBMED:12269810</scope>
</reference>
<reference key="20">
    <citation type="journal article" date="2002" name="Genomics">
        <title>Cloning and characterization of a novel apolipoprotein A-I-binding protein, AI-BP, secreted by cells of the kidney proximal tubules in response to HDL or ApoA-I.</title>
        <authorList>
            <person name="Ritter M."/>
            <person name="Buechler C."/>
            <person name="Boettcher A."/>
            <person name="Barlage S."/>
            <person name="Schmitz-Madry A."/>
            <person name="Orso E."/>
            <person name="Bared S.M."/>
            <person name="Schmiedeknecht G."/>
            <person name="Baehr C.H."/>
            <person name="Fricker G."/>
            <person name="Schmitz G."/>
        </authorList>
    </citation>
    <scope>INTERACTION WITH NAXE</scope>
</reference>
<reference key="21">
    <citation type="journal article" date="2003" name="J. Lipid Res.">
        <title>Characterization of specifically oxidized apolipoproteins in mildly oxidized high density lipoprotein.</title>
        <authorList>
            <person name="Pankhurst G."/>
            <person name="Wang X.L."/>
            <person name="Wilcken D.E."/>
            <person name="Baernthaler G."/>
            <person name="Panzenboeck U."/>
            <person name="Raftery M."/>
            <person name="Stocker R."/>
        </authorList>
    </citation>
    <scope>MASS SPECTROMETRY</scope>
    <scope>OXIDATION AT MET-49</scope>
</reference>
<reference key="22">
    <citation type="journal article" date="2003" name="J. Lipid Res.">
        <title>Novel mass spectrometric immunoassays for the rapid structural characterization of plasma apolipoproteins.</title>
        <authorList>
            <person name="Niederkofler E.E."/>
            <person name="Tubbs K.A."/>
            <person name="Kiernan U.A."/>
            <person name="Nedelkov D."/>
            <person name="Nelson R.W."/>
        </authorList>
    </citation>
    <scope>MASS SPECTROMETRY</scope>
    <scope>SUBUNIT</scope>
</reference>
<reference key="23">
    <citation type="journal article" date="2005" name="Biochem. Biophys. Res. Commun.">
        <title>NDRG1 interacts with APO A-I and A-II and is a functional candidate for the HDL-C QTL on 8q24.</title>
        <authorList>
            <person name="Hunter M."/>
            <person name="Angelicheva D."/>
            <person name="Tournev I."/>
            <person name="Ingley E."/>
            <person name="Chan D.C."/>
            <person name="Watts G.F."/>
            <person name="Kremensky I."/>
            <person name="Kalaydjieva L."/>
        </authorList>
    </citation>
    <scope>INTERACTION WITH NDRG1</scope>
</reference>
<reference key="24">
    <citation type="journal article" date="2009" name="J. Proteome Res.">
        <title>An initial characterization of the serum phosphoproteome.</title>
        <authorList>
            <person name="Zhou W."/>
            <person name="Ross M.M."/>
            <person name="Tessitore A."/>
            <person name="Ornstein D."/>
            <person name="Vanmeter A."/>
            <person name="Liotta L.A."/>
            <person name="Petricoin E.F. III"/>
        </authorList>
    </citation>
    <scope>PHOSPHORYLATION [LARGE SCALE ANALYSIS] AT SER-68</scope>
    <scope>IDENTIFICATION BY MASS SPECTROMETRY [LARGE SCALE ANALYSIS]</scope>
    <source>
        <tissue>Serum</tissue>
    </source>
</reference>
<reference key="25">
    <citation type="journal article" date="2011" name="BMC Syst. Biol.">
        <title>Initial characterization of the human central proteome.</title>
        <authorList>
            <person name="Burkard T.R."/>
            <person name="Planyavsky M."/>
            <person name="Kaupe I."/>
            <person name="Breitwieser F.P."/>
            <person name="Buerckstuemmer T."/>
            <person name="Bennett K.L."/>
            <person name="Superti-Furga G."/>
            <person name="Colinge J."/>
        </authorList>
    </citation>
    <scope>IDENTIFICATION BY MASS SPECTROMETRY [LARGE SCALE ANALYSIS]</scope>
</reference>
<reference key="26">
    <citation type="journal article" date="2013" name="J. Proteome Res.">
        <title>LC-MS/MS characterization of O-glycosylation sites and glycan structures of human cerebrospinal fluid glycoproteins.</title>
        <authorList>
            <person name="Halim A."/>
            <person name="Ruetschi U."/>
            <person name="Larson G."/>
            <person name="Nilsson J."/>
        </authorList>
    </citation>
    <scope>GLYCOSYLATION</scope>
    <scope>IDENTIFICATION BY MASS SPECTROMETRY</scope>
</reference>
<reference key="27">
    <citation type="journal article" date="2014" name="J. Proteomics">
        <title>An enzyme assisted RP-RPLC approach for in-depth analysis of human liver phosphoproteome.</title>
        <authorList>
            <person name="Bian Y."/>
            <person name="Song C."/>
            <person name="Cheng K."/>
            <person name="Dong M."/>
            <person name="Wang F."/>
            <person name="Huang J."/>
            <person name="Sun D."/>
            <person name="Wang L."/>
            <person name="Ye M."/>
            <person name="Zou H."/>
        </authorList>
    </citation>
    <scope>IDENTIFICATION BY MASS SPECTROMETRY [LARGE SCALE ANALYSIS]</scope>
    <source>
        <tissue>Liver</tissue>
    </source>
</reference>
<reference key="28">
    <citation type="journal article" date="2015" name="Cell">
        <title>A single kinase generates the majority of the secreted phosphoproteome.</title>
        <authorList>
            <person name="Tagliabracci V.S."/>
            <person name="Wiley S.E."/>
            <person name="Guo X."/>
            <person name="Kinch L.N."/>
            <person name="Durrant E."/>
            <person name="Wen J."/>
            <person name="Xiao J."/>
            <person name="Cui J."/>
            <person name="Nguyen K.B."/>
            <person name="Engel J.L."/>
            <person name="Coon J.J."/>
            <person name="Grishin N."/>
            <person name="Pinna L.A."/>
            <person name="Pagliarini D.J."/>
            <person name="Dixon J.E."/>
        </authorList>
    </citation>
    <scope>PHOSPHORYLATION AT SER-54 AND SER-68</scope>
</reference>
<sequence length="100" mass="11175">MKLLAATVLLLTICSLEGALVRRQAKEPCVESLVSQYFQTVTDYGKDLMEKVKSPELQAEAKSYFEKSKEQLTPLIKKAGTELVNFLSYFVELGTQPATQ</sequence>
<organism>
    <name type="scientific">Homo sapiens</name>
    <name type="common">Human</name>
    <dbReference type="NCBI Taxonomy" id="9606"/>
    <lineage>
        <taxon>Eukaryota</taxon>
        <taxon>Metazoa</taxon>
        <taxon>Chordata</taxon>
        <taxon>Craniata</taxon>
        <taxon>Vertebrata</taxon>
        <taxon>Euteleostomi</taxon>
        <taxon>Mammalia</taxon>
        <taxon>Eutheria</taxon>
        <taxon>Euarchontoglires</taxon>
        <taxon>Primates</taxon>
        <taxon>Haplorrhini</taxon>
        <taxon>Catarrhini</taxon>
        <taxon>Hominidae</taxon>
        <taxon>Homo</taxon>
    </lineage>
</organism>
<comment type="function">
    <text>May stabilize HDL (high density lipoprotein) structure by its association with lipids, and affect the HDL metabolism.</text>
</comment>
<comment type="subunit">
    <text evidence="2 3 5 8 12">Monomer. Homodimer; disulfide-linked. Also forms a disulfide-linked heterodimer with APOD (PubMed:7918467). Interacts with NAXE and NDRG1.</text>
</comment>
<comment type="subunit">
    <text evidence="1">(Microbial infection) Interacts with HCV core protein.</text>
</comment>
<comment type="interaction">
    <interactant intactId="EBI-1171525">
        <id>P02652</id>
    </interactant>
    <interactant intactId="EBI-13059134">
        <id>Q13520</id>
        <label>AQP6</label>
    </interactant>
    <organismsDiffer>false</organismsDiffer>
    <experiments>3</experiments>
</comment>
<comment type="interaction">
    <interactant intactId="EBI-1171525">
        <id>P02652</id>
    </interactant>
    <interactant intactId="EBI-744545">
        <id>Q8NEC5</id>
        <label>CATSPER1</label>
    </interactant>
    <organismsDiffer>false</organismsDiffer>
    <experiments>7</experiments>
</comment>
<comment type="interaction">
    <interactant intactId="EBI-1171525">
        <id>P02652</id>
    </interactant>
    <interactant intactId="EBI-752069">
        <id>Q9H5X1</id>
        <label>CIAO2A</label>
    </interactant>
    <organismsDiffer>false</organismsDiffer>
    <experiments>3</experiments>
</comment>
<comment type="interaction">
    <interactant intactId="EBI-1171525">
        <id>P02652</id>
    </interactant>
    <interactant intactId="EBI-2680384">
        <id>Q9BQA9</id>
        <label>CYBC1</label>
    </interactant>
    <organismsDiffer>false</organismsDiffer>
    <experiments>3</experiments>
</comment>
<comment type="interaction">
    <interactant intactId="EBI-1171525">
        <id>P02652</id>
    </interactant>
    <interactant intactId="EBI-18908258">
        <id>O00258</id>
        <label>GET1</label>
    </interactant>
    <organismsDiffer>false</organismsDiffer>
    <experiments>3</experiments>
</comment>
<comment type="interaction">
    <interactant intactId="EBI-1171525">
        <id>P02652</id>
    </interactant>
    <interactant intactId="EBI-17458373">
        <id>P48165</id>
        <label>GJA8</label>
    </interactant>
    <organismsDiffer>false</organismsDiffer>
    <experiments>3</experiments>
</comment>
<comment type="interaction">
    <interactant intactId="EBI-1171525">
        <id>P02652</id>
    </interactant>
    <interactant intactId="EBI-18053395">
        <id>Q7Z5P4</id>
        <label>HSD17B13</label>
    </interactant>
    <organismsDiffer>false</organismsDiffer>
    <experiments>3</experiments>
</comment>
<comment type="interaction">
    <interactant intactId="EBI-1171525">
        <id>P02652</id>
    </interactant>
    <interactant intactId="EBI-8632435">
        <id>P43628</id>
        <label>KIR2DL3</label>
    </interactant>
    <organismsDiffer>false</organismsDiffer>
    <experiments>3</experiments>
</comment>
<comment type="interaction">
    <interactant intactId="EBI-1171525">
        <id>P02652</id>
    </interactant>
    <interactant intactId="EBI-17263240">
        <id>P15941-11</id>
        <label>MUC1</label>
    </interactant>
    <organismsDiffer>false</organismsDiffer>
    <experiments>3</experiments>
</comment>
<comment type="interaction">
    <interactant intactId="EBI-1171525">
        <id>P02652</id>
    </interactant>
    <interactant intactId="EBI-7037612">
        <id>Q96RD7</id>
        <label>PANX1</label>
    </interactant>
    <organismsDiffer>false</organismsDiffer>
    <experiments>3</experiments>
</comment>
<comment type="interaction">
    <interactant intactId="EBI-1171525">
        <id>P02652</id>
    </interactant>
    <interactant intactId="EBI-716063">
        <id>Q13113</id>
        <label>PDZK1IP1</label>
    </interactant>
    <organismsDiffer>false</organismsDiffer>
    <experiments>3</experiments>
</comment>
<comment type="interaction">
    <interactant intactId="EBI-1171525">
        <id>P02652</id>
    </interactant>
    <interactant intactId="EBI-4289564">
        <id>P30825</id>
        <label>SLC7A1</label>
    </interactant>
    <organismsDiffer>false</organismsDiffer>
    <experiments>3</experiments>
</comment>
<comment type="interaction">
    <interactant intactId="EBI-1171525">
        <id>P02652</id>
    </interactant>
    <interactant intactId="EBI-17280858">
        <id>Q8WWF3</id>
        <label>SSMEM1</label>
    </interactant>
    <organismsDiffer>false</organismsDiffer>
    <experiments>3</experiments>
</comment>
<comment type="interaction">
    <interactant intactId="EBI-1171525">
        <id>P02652</id>
    </interactant>
    <interactant intactId="EBI-1211440">
        <id>P27105</id>
        <label>STOM</label>
    </interactant>
    <organismsDiffer>false</organismsDiffer>
    <experiments>3</experiments>
</comment>
<comment type="interaction">
    <interactant intactId="EBI-1171525">
        <id>P02652</id>
    </interactant>
    <interactant intactId="EBI-10823938">
        <id>Q9NWC5</id>
        <label>TMEM45A</label>
    </interactant>
    <organismsDiffer>false</organismsDiffer>
    <experiments>3</experiments>
</comment>
<comment type="subcellular location">
    <subcellularLocation>
        <location evidence="8">Secreted</location>
    </subcellularLocation>
</comment>
<comment type="tissue specificity">
    <text>Plasma; synthesized in the liver and intestine.</text>
</comment>
<comment type="PTM">
    <text evidence="9">Phosphorylation sites are present in the extracellular medium.</text>
</comment>
<comment type="PTM">
    <text evidence="7">Apolipoprotein A-II is O-glycosylated.</text>
</comment>
<comment type="mass spectrometry" mass="17252.0" method="Electrospray" evidence="4">
    <molecule>Apolipoprotein A-II</molecule>
    <text>Homodimer, without methionine sulfoxide.</text>
</comment>
<comment type="mass spectrometry" mass="17269.0" method="Electrospray" evidence="4">
    <molecule>Apolipoprotein A-II</molecule>
    <text>Homodimer, with 1 methionine sulfoxide, oxidation at Met-49.</text>
</comment>
<comment type="mass spectrometry" mass="8701.2" method="MALDI" evidence="3">
    <molecule>Apolipoprotein A-II</molecule>
    <text>Monomer.</text>
</comment>
<comment type="mass spectrometry" mass="8823.4" method="MALDI" evidence="3">
    <molecule>Apolipoprotein A-II</molecule>
    <text>Cysteinylated ApoA-II monomer.</text>
</comment>
<comment type="mass spectrometry" mass="17421.3" method="MALDI" evidence="3">
    <molecule>Apolipoprotein A-II</molecule>
    <text>Homodimer.</text>
</comment>
<comment type="mass spectrometry" mass="17293.4" method="MALDI" evidence="3">
    <molecule>Apolipoprotein A-II</molecule>
    <text>Heterodimer with truncated apolipoprotein A-II.</text>
</comment>
<comment type="mass spectrometry" mass="8578.3" method="MALDI" evidence="3">
    <molecule>Truncated apolipoprotein A-II</molecule>
    <text>Monomer.</text>
</comment>
<comment type="mass spectrometry" mass="17166.2" method="MALDI" evidence="3">
    <molecule>Truncated apolipoprotein A-II</molecule>
    <text>Homodimer.</text>
</comment>
<comment type="mass spectrometry" mass="17380.0" method="MALDI" evidence="8">
    <molecule>Apolipoprotein A-II</molecule>
    <text>Homodimer.</text>
</comment>
<comment type="polymorphism">
    <text evidence="6">A homozygous transition at position 1 of intron 3 of APOA2 results in deficiency of apolipoprotein A-II, without significant influence either on lipid and lipoprotein profiles or on the occurrence of coronary artery disease [MIM:107670].</text>
</comment>
<comment type="similarity">
    <text evidence="13">Belongs to the apolipoprotein A2 family.</text>
</comment>
<comment type="caution">
    <text evidence="14 16">A paper describing the crystal structure of this protein has been retracted due to evidence of fabricated data (see also US Office of Research Integrity Notice 2018-07782).</text>
</comment>
<evidence type="ECO:0000269" key="1">
    <source>
    </source>
</evidence>
<evidence type="ECO:0000269" key="2">
    <source>
    </source>
</evidence>
<evidence type="ECO:0000269" key="3">
    <source>
    </source>
</evidence>
<evidence type="ECO:0000269" key="4">
    <source>
    </source>
</evidence>
<evidence type="ECO:0000269" key="5">
    <source>
    </source>
</evidence>
<evidence type="ECO:0000269" key="6">
    <source>
    </source>
</evidence>
<evidence type="ECO:0000269" key="7">
    <source>
    </source>
</evidence>
<evidence type="ECO:0000269" key="8">
    <source>
    </source>
</evidence>
<evidence type="ECO:0000269" key="9">
    <source>
    </source>
</evidence>
<evidence type="ECO:0000269" key="10">
    <source>
    </source>
</evidence>
<evidence type="ECO:0000269" key="11">
    <source>
    </source>
</evidence>
<evidence type="ECO:0000269" key="12">
    <source>
    </source>
</evidence>
<evidence type="ECO:0000305" key="13"/>
<evidence type="ECO:0000305" key="14">
    <source>
    </source>
</evidence>
<evidence type="ECO:0000305" key="15">
    <source>
    </source>
</evidence>
<evidence type="ECO:0000305" key="16">
    <source>
    </source>
</evidence>
<evidence type="ECO:0000305" key="17">
    <source>
    </source>
</evidence>
<evidence type="ECO:0007744" key="18">
    <source>
    </source>
</evidence>
<feature type="signal peptide" evidence="11">
    <location>
        <begin position="1"/>
        <end position="18"/>
    </location>
</feature>
<feature type="chain" id="PRO_0000425351" description="Proapolipoprotein A-II">
    <location>
        <begin position="19"/>
        <end position="100"/>
    </location>
</feature>
<feature type="chain" id="PRO_0000002003" description="Apolipoprotein A-II" evidence="10">
    <location>
        <begin position="24"/>
        <end position="100"/>
    </location>
</feature>
<feature type="chain" id="PRO_0000002004" description="Truncated apolipoprotein A-II" evidence="15">
    <location>
        <begin position="24"/>
        <end position="99"/>
    </location>
</feature>
<feature type="region of interest" description="O-glycosylated at one site">
    <location>
        <begin position="32"/>
        <end position="43"/>
    </location>
</feature>
<feature type="modified residue" description="Pyrrolidone carboxylic acid" evidence="8 10">
    <location>
        <position position="24"/>
    </location>
</feature>
<feature type="modified residue" description="Methionine sulfoxide" evidence="4">
    <location>
        <position position="49"/>
    </location>
</feature>
<feature type="modified residue" description="Phosphoserine; by FAM20C" evidence="9">
    <location>
        <position position="54"/>
    </location>
</feature>
<feature type="modified residue" description="Phosphoserine; by FAM20C" evidence="9 18">
    <location>
        <position position="68"/>
    </location>
</feature>
<feature type="disulfide bond" description="Interchain (with C-136 in APOD); in heterodimeric form" evidence="17">
    <location>
        <position position="29"/>
    </location>
</feature>
<feature type="sequence conflict" description="In Ref. 1; CAA28583." evidence="13" ref="1">
    <original>Q</original>
    <variation>H</variation>
    <location>
        <position position="96"/>
    </location>
</feature>
<dbReference type="EMBL" id="X04898">
    <property type="protein sequence ID" value="CAA28583.1"/>
    <property type="molecule type" value="Genomic_DNA"/>
</dbReference>
<dbReference type="EMBL" id="X00955">
    <property type="protein sequence ID" value="CAA25467.1"/>
    <property type="molecule type" value="mRNA"/>
</dbReference>
<dbReference type="EMBL" id="X02905">
    <property type="protein sequence ID" value="CAA26665.1"/>
    <property type="molecule type" value="Genomic_DNA"/>
</dbReference>
<dbReference type="EMBL" id="X02619">
    <property type="protein sequence ID" value="CAA26474.1"/>
    <property type="molecule type" value="Genomic_DNA"/>
</dbReference>
<dbReference type="EMBL" id="M29882">
    <property type="protein sequence ID" value="AAA51701.1"/>
    <property type="molecule type" value="mRNA"/>
</dbReference>
<dbReference type="EMBL" id="AY100524">
    <property type="protein sequence ID" value="AAM49807.1"/>
    <property type="molecule type" value="Genomic_DNA"/>
</dbReference>
<dbReference type="EMBL" id="AK312034">
    <property type="protein sequence ID" value="BAG34971.1"/>
    <property type="molecule type" value="mRNA"/>
</dbReference>
<dbReference type="EMBL" id="BT006786">
    <property type="protein sequence ID" value="AAP35432.1"/>
    <property type="molecule type" value="mRNA"/>
</dbReference>
<dbReference type="EMBL" id="AL590714">
    <property type="status" value="NOT_ANNOTATED_CDS"/>
    <property type="molecule type" value="Genomic_DNA"/>
</dbReference>
<dbReference type="EMBL" id="BC005282">
    <property type="protein sequence ID" value="AAH05282.1"/>
    <property type="molecule type" value="mRNA"/>
</dbReference>
<dbReference type="CCDS" id="CCDS1226.1"/>
<dbReference type="PIR" id="A93586">
    <property type="entry name" value="LPHUA2"/>
</dbReference>
<dbReference type="RefSeq" id="NP_001634.1">
    <property type="nucleotide sequence ID" value="NM_001643.2"/>
</dbReference>
<dbReference type="SMR" id="P02652"/>
<dbReference type="BioGRID" id="106833">
    <property type="interactions" value="115"/>
</dbReference>
<dbReference type="FunCoup" id="P02652">
    <property type="interactions" value="352"/>
</dbReference>
<dbReference type="IntAct" id="P02652">
    <property type="interactions" value="56"/>
</dbReference>
<dbReference type="MINT" id="P02652"/>
<dbReference type="STRING" id="9606.ENSP00000356969"/>
<dbReference type="DrugBank" id="DB09130">
    <property type="generic name" value="Copper"/>
</dbReference>
<dbReference type="DrugBank" id="DB11886">
    <property type="generic name" value="Infigratinib"/>
</dbReference>
<dbReference type="DrugBank" id="DB00877">
    <property type="generic name" value="Sirolimus"/>
</dbReference>
<dbReference type="DrugBank" id="DB00460">
    <property type="generic name" value="Verteporfin"/>
</dbReference>
<dbReference type="DrugBank" id="DB01593">
    <property type="generic name" value="Zinc"/>
</dbReference>
<dbReference type="DrugBank" id="DB14487">
    <property type="generic name" value="Zinc acetate"/>
</dbReference>
<dbReference type="TCDB" id="9.B.445.1.1">
    <property type="family name" value="the apolipoprotein a2 (alp-a2) family"/>
</dbReference>
<dbReference type="CarbonylDB" id="P02652"/>
<dbReference type="GlyCosmos" id="P02652">
    <property type="glycosylation" value="3 sites, 3 glycans"/>
</dbReference>
<dbReference type="GlyGen" id="P02652">
    <property type="glycosylation" value="6 sites, 5 O-linked glycans (6 sites)"/>
</dbReference>
<dbReference type="iPTMnet" id="P02652"/>
<dbReference type="PhosphoSitePlus" id="P02652"/>
<dbReference type="BioMuta" id="APOA2"/>
<dbReference type="DMDM" id="114000"/>
<dbReference type="CPTAC" id="non-CPTAC-1073"/>
<dbReference type="CPTAC" id="non-CPTAC-1074"/>
<dbReference type="jPOST" id="P02652"/>
<dbReference type="MassIVE" id="P02652"/>
<dbReference type="PaxDb" id="9606-ENSP00000356969"/>
<dbReference type="PeptideAtlas" id="P02652"/>
<dbReference type="ProteomicsDB" id="51538"/>
<dbReference type="TopDownProteomics" id="P02652"/>
<dbReference type="Antibodypedia" id="20506">
    <property type="antibodies" value="502 antibodies from 40 providers"/>
</dbReference>
<dbReference type="DNASU" id="336"/>
<dbReference type="Ensembl" id="ENST00000367990.7">
    <property type="protein sequence ID" value="ENSP00000356969.3"/>
    <property type="gene ID" value="ENSG00000158874.12"/>
</dbReference>
<dbReference type="Ensembl" id="ENST00000463273.6">
    <property type="protein sequence ID" value="ENSP00000476740.2"/>
    <property type="gene ID" value="ENSG00000158874.12"/>
</dbReference>
<dbReference type="GeneID" id="336"/>
<dbReference type="KEGG" id="hsa:336"/>
<dbReference type="MANE-Select" id="ENST00000367990.7">
    <property type="protein sequence ID" value="ENSP00000356969.3"/>
    <property type="RefSeq nucleotide sequence ID" value="NM_001643.2"/>
    <property type="RefSeq protein sequence ID" value="NP_001634.1"/>
</dbReference>
<dbReference type="UCSC" id="uc001fzc.2">
    <property type="organism name" value="human"/>
</dbReference>
<dbReference type="AGR" id="HGNC:601"/>
<dbReference type="CTD" id="336"/>
<dbReference type="DisGeNET" id="336"/>
<dbReference type="GeneCards" id="APOA2"/>
<dbReference type="HGNC" id="HGNC:601">
    <property type="gene designation" value="APOA2"/>
</dbReference>
<dbReference type="HPA" id="ENSG00000158874">
    <property type="expression patterns" value="Tissue enriched (liver)"/>
</dbReference>
<dbReference type="MalaCards" id="APOA2"/>
<dbReference type="MIM" id="107670">
    <property type="type" value="gene+phenotype"/>
</dbReference>
<dbReference type="neXtProt" id="NX_P02652"/>
<dbReference type="OpenTargets" id="ENSG00000158874"/>
<dbReference type="Orphanet" id="238269">
    <property type="disease" value="AApoAII amyloidosis"/>
</dbReference>
<dbReference type="PharmGKB" id="PA24886"/>
<dbReference type="VEuPathDB" id="HostDB:ENSG00000158874"/>
<dbReference type="eggNOG" id="ENOG502SVYZ">
    <property type="taxonomic scope" value="Eukaryota"/>
</dbReference>
<dbReference type="GeneTree" id="ENSGT00390000003306"/>
<dbReference type="InParanoid" id="P02652"/>
<dbReference type="OMA" id="LTICSFE"/>
<dbReference type="OrthoDB" id="9450770at2759"/>
<dbReference type="PAN-GO" id="P02652">
    <property type="GO annotations" value="18 GO annotations based on evolutionary models"/>
</dbReference>
<dbReference type="PhylomeDB" id="P02652"/>
<dbReference type="TreeFam" id="TF338165"/>
<dbReference type="PathwayCommons" id="P02652"/>
<dbReference type="Reactome" id="R-HSA-1989781">
    <property type="pathway name" value="PPARA activates gene expression"/>
</dbReference>
<dbReference type="Reactome" id="R-HSA-381426">
    <property type="pathway name" value="Regulation of Insulin-like Growth Factor (IGF) transport and uptake by Insulin-like Growth Factor Binding Proteins (IGFBPs)"/>
</dbReference>
<dbReference type="Reactome" id="R-HSA-8957275">
    <property type="pathway name" value="Post-translational protein phosphorylation"/>
</dbReference>
<dbReference type="Reactome" id="R-HSA-8963888">
    <property type="pathway name" value="Chylomicron assembly"/>
</dbReference>
<dbReference type="Reactome" id="R-HSA-8963901">
    <property type="pathway name" value="Chylomicron remodeling"/>
</dbReference>
<dbReference type="Reactome" id="R-HSA-975634">
    <property type="pathway name" value="Retinoid metabolism and transport"/>
</dbReference>
<dbReference type="SignaLink" id="P02652"/>
<dbReference type="BioGRID-ORCS" id="336">
    <property type="hits" value="13 hits in 1144 CRISPR screens"/>
</dbReference>
<dbReference type="ChiTaRS" id="APOA2">
    <property type="organism name" value="human"/>
</dbReference>
<dbReference type="GeneWiki" id="APOA2"/>
<dbReference type="GenomeRNAi" id="336"/>
<dbReference type="Pharos" id="P02652">
    <property type="development level" value="Tbio"/>
</dbReference>
<dbReference type="PRO" id="PR:P02652"/>
<dbReference type="Proteomes" id="UP000005640">
    <property type="component" value="Chromosome 1"/>
</dbReference>
<dbReference type="RNAct" id="P02652">
    <property type="molecule type" value="protein"/>
</dbReference>
<dbReference type="Bgee" id="ENSG00000158874">
    <property type="expression patterns" value="Expressed in right lobe of liver and 100 other cell types or tissues"/>
</dbReference>
<dbReference type="ExpressionAtlas" id="P02652">
    <property type="expression patterns" value="baseline and differential"/>
</dbReference>
<dbReference type="GO" id="GO:0072562">
    <property type="term" value="C:blood microparticle"/>
    <property type="evidence" value="ECO:0007005"/>
    <property type="project" value="UniProtKB"/>
</dbReference>
<dbReference type="GO" id="GO:0042627">
    <property type="term" value="C:chylomicron"/>
    <property type="evidence" value="ECO:0000314"/>
    <property type="project" value="BHF-UCL"/>
</dbReference>
<dbReference type="GO" id="GO:0005829">
    <property type="term" value="C:cytosol"/>
    <property type="evidence" value="ECO:0000304"/>
    <property type="project" value="Reactome"/>
</dbReference>
<dbReference type="GO" id="GO:0005769">
    <property type="term" value="C:early endosome"/>
    <property type="evidence" value="ECO:0000304"/>
    <property type="project" value="Reactome"/>
</dbReference>
<dbReference type="GO" id="GO:0005788">
    <property type="term" value="C:endoplasmic reticulum lumen"/>
    <property type="evidence" value="ECO:0000304"/>
    <property type="project" value="Reactome"/>
</dbReference>
<dbReference type="GO" id="GO:0070062">
    <property type="term" value="C:extracellular exosome"/>
    <property type="evidence" value="ECO:0007005"/>
    <property type="project" value="UniProtKB"/>
</dbReference>
<dbReference type="GO" id="GO:0005576">
    <property type="term" value="C:extracellular region"/>
    <property type="evidence" value="ECO:0000304"/>
    <property type="project" value="Reactome"/>
</dbReference>
<dbReference type="GO" id="GO:0005615">
    <property type="term" value="C:extracellular space"/>
    <property type="evidence" value="ECO:0000314"/>
    <property type="project" value="UniProt"/>
</dbReference>
<dbReference type="GO" id="GO:0034364">
    <property type="term" value="C:high-density lipoprotein particle"/>
    <property type="evidence" value="ECO:0000314"/>
    <property type="project" value="BHF-UCL"/>
</dbReference>
<dbReference type="GO" id="GO:0034366">
    <property type="term" value="C:spherical high-density lipoprotein particle"/>
    <property type="evidence" value="ECO:0000314"/>
    <property type="project" value="BHF-UCL"/>
</dbReference>
<dbReference type="GO" id="GO:0034361">
    <property type="term" value="C:very-low-density lipoprotein particle"/>
    <property type="evidence" value="ECO:0000314"/>
    <property type="project" value="BHF-UCL"/>
</dbReference>
<dbReference type="GO" id="GO:0034190">
    <property type="term" value="F:apolipoprotein receptor binding"/>
    <property type="evidence" value="ECO:0000353"/>
    <property type="project" value="BHF-UCL"/>
</dbReference>
<dbReference type="GO" id="GO:0015485">
    <property type="term" value="F:cholesterol binding"/>
    <property type="evidence" value="ECO:0000314"/>
    <property type="project" value="BHF-UCL"/>
</dbReference>
<dbReference type="GO" id="GO:0019899">
    <property type="term" value="F:enzyme binding"/>
    <property type="evidence" value="ECO:0000353"/>
    <property type="project" value="BHF-UCL"/>
</dbReference>
<dbReference type="GO" id="GO:0031072">
    <property type="term" value="F:heat shock protein binding"/>
    <property type="evidence" value="ECO:0000353"/>
    <property type="project" value="CAFA"/>
</dbReference>
<dbReference type="GO" id="GO:0008035">
    <property type="term" value="F:high-density lipoprotein particle binding"/>
    <property type="evidence" value="ECO:0000318"/>
    <property type="project" value="GO_Central"/>
</dbReference>
<dbReference type="GO" id="GO:0070653">
    <property type="term" value="F:high-density lipoprotein particle receptor binding"/>
    <property type="evidence" value="ECO:0000353"/>
    <property type="project" value="BHF-UCL"/>
</dbReference>
<dbReference type="GO" id="GO:0055102">
    <property type="term" value="F:lipase inhibitor activity"/>
    <property type="evidence" value="ECO:0000314"/>
    <property type="project" value="BHF-UCL"/>
</dbReference>
<dbReference type="GO" id="GO:0008289">
    <property type="term" value="F:lipid binding"/>
    <property type="evidence" value="ECO:0000314"/>
    <property type="project" value="BHF-UCL"/>
</dbReference>
<dbReference type="GO" id="GO:0005319">
    <property type="term" value="F:lipid transporter activity"/>
    <property type="evidence" value="ECO:0000314"/>
    <property type="project" value="BHF-UCL"/>
</dbReference>
<dbReference type="GO" id="GO:0031210">
    <property type="term" value="F:phosphatidylcholine binding"/>
    <property type="evidence" value="ECO:0000314"/>
    <property type="project" value="BHF-UCL"/>
</dbReference>
<dbReference type="GO" id="GO:0060228">
    <property type="term" value="F:phosphatidylcholine-sterol O-acyltransferase activator activity"/>
    <property type="evidence" value="ECO:0000314"/>
    <property type="project" value="BHF-UCL"/>
</dbReference>
<dbReference type="GO" id="GO:0005543">
    <property type="term" value="F:phospholipid binding"/>
    <property type="evidence" value="ECO:0000314"/>
    <property type="project" value="BHF-UCL"/>
</dbReference>
<dbReference type="GO" id="GO:0046982">
    <property type="term" value="F:protein heterodimerization activity"/>
    <property type="evidence" value="ECO:0000353"/>
    <property type="project" value="UniProtKB"/>
</dbReference>
<dbReference type="GO" id="GO:0042803">
    <property type="term" value="F:protein homodimerization activity"/>
    <property type="evidence" value="ECO:0000314"/>
    <property type="project" value="BHF-UCL"/>
</dbReference>
<dbReference type="GO" id="GO:0048018">
    <property type="term" value="F:receptor ligand activity"/>
    <property type="evidence" value="ECO:0000314"/>
    <property type="project" value="UniProt"/>
</dbReference>
<dbReference type="GO" id="GO:0005102">
    <property type="term" value="F:signaling receptor binding"/>
    <property type="evidence" value="ECO:0000353"/>
    <property type="project" value="ARUK-UCL"/>
</dbReference>
<dbReference type="GO" id="GO:0071402">
    <property type="term" value="P:cellular response to lipoprotein particle stimulus"/>
    <property type="evidence" value="ECO:0000314"/>
    <property type="project" value="UniProt"/>
</dbReference>
<dbReference type="GO" id="GO:0033344">
    <property type="term" value="P:cholesterol efflux"/>
    <property type="evidence" value="ECO:0000314"/>
    <property type="project" value="BHF-UCL"/>
</dbReference>
<dbReference type="GO" id="GO:0042632">
    <property type="term" value="P:cholesterol homeostasis"/>
    <property type="evidence" value="ECO:0000314"/>
    <property type="project" value="BHF-UCL"/>
</dbReference>
<dbReference type="GO" id="GO:0008203">
    <property type="term" value="P:cholesterol metabolic process"/>
    <property type="evidence" value="ECO:0007669"/>
    <property type="project" value="Ensembl"/>
</dbReference>
<dbReference type="GO" id="GO:0030301">
    <property type="term" value="P:cholesterol transport"/>
    <property type="evidence" value="ECO:0000318"/>
    <property type="project" value="GO_Central"/>
</dbReference>
<dbReference type="GO" id="GO:0046340">
    <property type="term" value="P:diacylglycerol catabolic process"/>
    <property type="evidence" value="ECO:0000314"/>
    <property type="project" value="BHF-UCL"/>
</dbReference>
<dbReference type="GO" id="GO:0034380">
    <property type="term" value="P:high-density lipoprotein particle assembly"/>
    <property type="evidence" value="ECO:0000314"/>
    <property type="project" value="BHF-UCL"/>
</dbReference>
<dbReference type="GO" id="GO:0034384">
    <property type="term" value="P:high-density lipoprotein particle clearance"/>
    <property type="evidence" value="ECO:0000314"/>
    <property type="project" value="BHF-UCL"/>
</dbReference>
<dbReference type="GO" id="GO:0034375">
    <property type="term" value="P:high-density lipoprotein particle remodeling"/>
    <property type="evidence" value="ECO:0000314"/>
    <property type="project" value="BHF-UCL"/>
</dbReference>
<dbReference type="GO" id="GO:0042157">
    <property type="term" value="P:lipoprotein metabolic process"/>
    <property type="evidence" value="ECO:0007669"/>
    <property type="project" value="Ensembl"/>
</dbReference>
<dbReference type="GO" id="GO:0034374">
    <property type="term" value="P:low-density lipoprotein particle remodeling"/>
    <property type="evidence" value="ECO:0000314"/>
    <property type="project" value="BHF-UCL"/>
</dbReference>
<dbReference type="GO" id="GO:0060621">
    <property type="term" value="P:negative regulation of cholesterol import"/>
    <property type="evidence" value="ECO:0000314"/>
    <property type="project" value="BHF-UCL"/>
</dbReference>
<dbReference type="GO" id="GO:0032375">
    <property type="term" value="P:negative regulation of cholesterol transport"/>
    <property type="evidence" value="ECO:0000315"/>
    <property type="project" value="BHF-UCL"/>
</dbReference>
<dbReference type="GO" id="GO:0060695">
    <property type="term" value="P:negative regulation of cholesterol transporter activity"/>
    <property type="evidence" value="ECO:0000314"/>
    <property type="project" value="BHF-UCL"/>
</dbReference>
<dbReference type="GO" id="GO:0002719">
    <property type="term" value="P:negative regulation of cytokine production involved in immune response"/>
    <property type="evidence" value="ECO:0000314"/>
    <property type="project" value="BHF-UCL"/>
</dbReference>
<dbReference type="GO" id="GO:0050995">
    <property type="term" value="P:negative regulation of lipid catabolic process"/>
    <property type="evidence" value="ECO:0000314"/>
    <property type="project" value="BHF-UCL"/>
</dbReference>
<dbReference type="GO" id="GO:0010903">
    <property type="term" value="P:negative regulation of very-low-density lipoprotein particle remodeling"/>
    <property type="evidence" value="ECO:0000314"/>
    <property type="project" value="BHF-UCL"/>
</dbReference>
<dbReference type="GO" id="GO:0018206">
    <property type="term" value="P:peptidyl-methionine modification"/>
    <property type="evidence" value="ECO:0000314"/>
    <property type="project" value="UniProtKB"/>
</dbReference>
<dbReference type="GO" id="GO:0006656">
    <property type="term" value="P:phosphatidylcholine biosynthetic process"/>
    <property type="evidence" value="ECO:0000314"/>
    <property type="project" value="BHF-UCL"/>
</dbReference>
<dbReference type="GO" id="GO:0009395">
    <property type="term" value="P:phospholipid catabolic process"/>
    <property type="evidence" value="ECO:0000314"/>
    <property type="project" value="BHF-UCL"/>
</dbReference>
<dbReference type="GO" id="GO:0033700">
    <property type="term" value="P:phospholipid efflux"/>
    <property type="evidence" value="ECO:0000314"/>
    <property type="project" value="BHF-UCL"/>
</dbReference>
<dbReference type="GO" id="GO:0032757">
    <property type="term" value="P:positive regulation of interleukin-8 production"/>
    <property type="evidence" value="ECO:0000314"/>
    <property type="project" value="UniProtKB"/>
</dbReference>
<dbReference type="GO" id="GO:0050996">
    <property type="term" value="P:positive regulation of lipid catabolic process"/>
    <property type="evidence" value="ECO:0000314"/>
    <property type="project" value="BHF-UCL"/>
</dbReference>
<dbReference type="GO" id="GO:0050766">
    <property type="term" value="P:positive regulation of phagocytosis"/>
    <property type="evidence" value="ECO:0000314"/>
    <property type="project" value="UniProtKB"/>
</dbReference>
<dbReference type="GO" id="GO:0018158">
    <property type="term" value="P:protein oxidation"/>
    <property type="evidence" value="ECO:0000314"/>
    <property type="project" value="UniProtKB"/>
</dbReference>
<dbReference type="GO" id="GO:0050821">
    <property type="term" value="P:protein stabilization"/>
    <property type="evidence" value="ECO:0000314"/>
    <property type="project" value="UniProtKB"/>
</dbReference>
<dbReference type="GO" id="GO:0030300">
    <property type="term" value="P:regulation of intestinal cholesterol absorption"/>
    <property type="evidence" value="ECO:0007669"/>
    <property type="project" value="Ensembl"/>
</dbReference>
<dbReference type="GO" id="GO:0031647">
    <property type="term" value="P:regulation of protein stability"/>
    <property type="evidence" value="ECO:0000314"/>
    <property type="project" value="BHF-UCL"/>
</dbReference>
<dbReference type="GO" id="GO:0009749">
    <property type="term" value="P:response to glucose"/>
    <property type="evidence" value="ECO:0000314"/>
    <property type="project" value="BHF-UCL"/>
</dbReference>
<dbReference type="GO" id="GO:0043691">
    <property type="term" value="P:reverse cholesterol transport"/>
    <property type="evidence" value="ECO:0000314"/>
    <property type="project" value="BHF-UCL"/>
</dbReference>
<dbReference type="GO" id="GO:0006641">
    <property type="term" value="P:triglyceride metabolic process"/>
    <property type="evidence" value="ECO:0000304"/>
    <property type="project" value="BHF-UCL"/>
</dbReference>
<dbReference type="GO" id="GO:0034370">
    <property type="term" value="P:triglyceride-rich lipoprotein particle remodeling"/>
    <property type="evidence" value="ECO:0000314"/>
    <property type="project" value="BHF-UCL"/>
</dbReference>
<dbReference type="Gene3D" id="6.10.250.100">
    <property type="match status" value="1"/>
</dbReference>
<dbReference type="InterPro" id="IPR006801">
    <property type="entry name" value="ApoA-II"/>
</dbReference>
<dbReference type="InterPro" id="IPR036172">
    <property type="entry name" value="ApoA-II_sf"/>
</dbReference>
<dbReference type="PANTHER" id="PTHR11027">
    <property type="entry name" value="APOLIPOPROTEIN A-II"/>
    <property type="match status" value="1"/>
</dbReference>
<dbReference type="PANTHER" id="PTHR11027:SF0">
    <property type="entry name" value="APOLIPOPROTEIN A-II"/>
    <property type="match status" value="1"/>
</dbReference>
<dbReference type="Pfam" id="PF04711">
    <property type="entry name" value="ApoA-II"/>
    <property type="match status" value="1"/>
</dbReference>
<dbReference type="SUPFAM" id="SSF82936">
    <property type="entry name" value="Apolipoprotein A-II"/>
    <property type="match status" value="1"/>
</dbReference>